<dbReference type="EC" id="5.4.99.25" evidence="1"/>
<dbReference type="EMBL" id="AJ965256">
    <property type="protein sequence ID" value="CAI83071.1"/>
    <property type="molecule type" value="Genomic_DNA"/>
</dbReference>
<dbReference type="RefSeq" id="WP_011309422.1">
    <property type="nucleotide sequence ID" value="NC_007356.1"/>
</dbReference>
<dbReference type="SMR" id="Q3ZXU5"/>
<dbReference type="KEGG" id="deh:cbdbA945"/>
<dbReference type="HOGENOM" id="CLU_032087_0_1_0"/>
<dbReference type="Proteomes" id="UP000000433">
    <property type="component" value="Chromosome"/>
</dbReference>
<dbReference type="GO" id="GO:0003723">
    <property type="term" value="F:RNA binding"/>
    <property type="evidence" value="ECO:0007669"/>
    <property type="project" value="InterPro"/>
</dbReference>
<dbReference type="GO" id="GO:0160148">
    <property type="term" value="F:tRNA pseudouridine(55) synthase activity"/>
    <property type="evidence" value="ECO:0007669"/>
    <property type="project" value="UniProtKB-EC"/>
</dbReference>
<dbReference type="GO" id="GO:1990481">
    <property type="term" value="P:mRNA pseudouridine synthesis"/>
    <property type="evidence" value="ECO:0007669"/>
    <property type="project" value="TreeGrafter"/>
</dbReference>
<dbReference type="GO" id="GO:0031119">
    <property type="term" value="P:tRNA pseudouridine synthesis"/>
    <property type="evidence" value="ECO:0007669"/>
    <property type="project" value="UniProtKB-UniRule"/>
</dbReference>
<dbReference type="CDD" id="cd02573">
    <property type="entry name" value="PseudoU_synth_EcTruB"/>
    <property type="match status" value="1"/>
</dbReference>
<dbReference type="Gene3D" id="3.30.2350.10">
    <property type="entry name" value="Pseudouridine synthase"/>
    <property type="match status" value="1"/>
</dbReference>
<dbReference type="HAMAP" id="MF_01080">
    <property type="entry name" value="TruB_bact"/>
    <property type="match status" value="1"/>
</dbReference>
<dbReference type="InterPro" id="IPR020103">
    <property type="entry name" value="PsdUridine_synth_cat_dom_sf"/>
</dbReference>
<dbReference type="InterPro" id="IPR002501">
    <property type="entry name" value="PsdUridine_synth_N"/>
</dbReference>
<dbReference type="InterPro" id="IPR014780">
    <property type="entry name" value="tRNA_psdUridine_synth_TruB"/>
</dbReference>
<dbReference type="InterPro" id="IPR032819">
    <property type="entry name" value="TruB_C"/>
</dbReference>
<dbReference type="NCBIfam" id="TIGR00431">
    <property type="entry name" value="TruB"/>
    <property type="match status" value="1"/>
</dbReference>
<dbReference type="PANTHER" id="PTHR13767:SF2">
    <property type="entry name" value="PSEUDOURIDYLATE SYNTHASE TRUB1"/>
    <property type="match status" value="1"/>
</dbReference>
<dbReference type="PANTHER" id="PTHR13767">
    <property type="entry name" value="TRNA-PSEUDOURIDINE SYNTHASE"/>
    <property type="match status" value="1"/>
</dbReference>
<dbReference type="Pfam" id="PF16198">
    <property type="entry name" value="TruB_C_2"/>
    <property type="match status" value="1"/>
</dbReference>
<dbReference type="Pfam" id="PF01509">
    <property type="entry name" value="TruB_N"/>
    <property type="match status" value="1"/>
</dbReference>
<dbReference type="SUPFAM" id="SSF55120">
    <property type="entry name" value="Pseudouridine synthase"/>
    <property type="match status" value="1"/>
</dbReference>
<proteinExistence type="inferred from homology"/>
<feature type="chain" id="PRO_0000229355" description="tRNA pseudouridine synthase B">
    <location>
        <begin position="1"/>
        <end position="300"/>
    </location>
</feature>
<feature type="active site" description="Nucleophile" evidence="1">
    <location>
        <position position="38"/>
    </location>
</feature>
<evidence type="ECO:0000255" key="1">
    <source>
        <dbReference type="HAMAP-Rule" id="MF_01080"/>
    </source>
</evidence>
<protein>
    <recommendedName>
        <fullName evidence="1">tRNA pseudouridine synthase B</fullName>
        <ecNumber evidence="1">5.4.99.25</ecNumber>
    </recommendedName>
    <alternativeName>
        <fullName evidence="1">tRNA pseudouridine(55) synthase</fullName>
        <shortName evidence="1">Psi55 synthase</shortName>
    </alternativeName>
    <alternativeName>
        <fullName evidence="1">tRNA pseudouridylate synthase</fullName>
    </alternativeName>
    <alternativeName>
        <fullName evidence="1">tRNA-uridine isomerase</fullName>
    </alternativeName>
</protein>
<sequence>MDGILNINKPFGITSFDVVAKVRRIYSQKRVGHGGTLDPYATGVIPVFLGRSTRLIEYLSSVSKTYLAEIELGVETDSYDSEGEITFRKTCDYVTREMIYKTLMDFQGEIIQIPPMYSAVKHRGMRLYNLARQGIEVERIPRVATIYGIELLNYTSPVLRVRIECGHGTYIRSLAFDLGRKLGCGAYLKSLVREAYGQFNLANSLDFADLEAAKCDGKLAGILLPLETAIGHLPRVSLDEKNITRLVNGLEITLDRIDKPEAVAVYNAENSFVAIIQPETDGTWHPAKVFIRQSPKPDAN</sequence>
<accession>Q3ZXU5</accession>
<reference key="1">
    <citation type="journal article" date="2005" name="Nat. Biotechnol.">
        <title>Genome sequence of the chlorinated compound-respiring bacterium Dehalococcoides species strain CBDB1.</title>
        <authorList>
            <person name="Kube M."/>
            <person name="Beck A."/>
            <person name="Zinder S.H."/>
            <person name="Kuhl H."/>
            <person name="Reinhardt R."/>
            <person name="Adrian L."/>
        </authorList>
    </citation>
    <scope>NUCLEOTIDE SEQUENCE [LARGE SCALE GENOMIC DNA]</scope>
    <source>
        <strain>CBDB1</strain>
    </source>
</reference>
<name>TRUB_DEHMC</name>
<keyword id="KW-0413">Isomerase</keyword>
<keyword id="KW-0819">tRNA processing</keyword>
<comment type="function">
    <text evidence="1">Responsible for synthesis of pseudouridine from uracil-55 in the psi GC loop of transfer RNAs.</text>
</comment>
<comment type="catalytic activity">
    <reaction evidence="1">
        <text>uridine(55) in tRNA = pseudouridine(55) in tRNA</text>
        <dbReference type="Rhea" id="RHEA:42532"/>
        <dbReference type="Rhea" id="RHEA-COMP:10101"/>
        <dbReference type="Rhea" id="RHEA-COMP:10102"/>
        <dbReference type="ChEBI" id="CHEBI:65314"/>
        <dbReference type="ChEBI" id="CHEBI:65315"/>
        <dbReference type="EC" id="5.4.99.25"/>
    </reaction>
</comment>
<comment type="similarity">
    <text evidence="1">Belongs to the pseudouridine synthase TruB family. Type 1 subfamily.</text>
</comment>
<organism>
    <name type="scientific">Dehalococcoides mccartyi (strain CBDB1)</name>
    <dbReference type="NCBI Taxonomy" id="255470"/>
    <lineage>
        <taxon>Bacteria</taxon>
        <taxon>Bacillati</taxon>
        <taxon>Chloroflexota</taxon>
        <taxon>Dehalococcoidia</taxon>
        <taxon>Dehalococcoidales</taxon>
        <taxon>Dehalococcoidaceae</taxon>
        <taxon>Dehalococcoides</taxon>
    </lineage>
</organism>
<gene>
    <name evidence="1" type="primary">truB</name>
    <name type="ordered locus">cbdbA945</name>
</gene>